<organism>
    <name type="scientific">Staphylococcus aureus (strain USA300)</name>
    <dbReference type="NCBI Taxonomy" id="367830"/>
    <lineage>
        <taxon>Bacteria</taxon>
        <taxon>Bacillati</taxon>
        <taxon>Bacillota</taxon>
        <taxon>Bacilli</taxon>
        <taxon>Bacillales</taxon>
        <taxon>Staphylococcaceae</taxon>
        <taxon>Staphylococcus</taxon>
    </lineage>
</organism>
<keyword id="KW-0131">Cell cycle</keyword>
<keyword id="KW-0132">Cell division</keyword>
<keyword id="KW-0963">Cytoplasm</keyword>
<keyword id="KW-0717">Septation</keyword>
<gene>
    <name evidence="1" type="primary">sepF</name>
    <name type="ordered locus">SAUSA300_1083</name>
</gene>
<protein>
    <recommendedName>
        <fullName evidence="1">Cell division protein SepF</fullName>
    </recommendedName>
</protein>
<evidence type="ECO:0000255" key="1">
    <source>
        <dbReference type="HAMAP-Rule" id="MF_01197"/>
    </source>
</evidence>
<evidence type="ECO:0000256" key="2">
    <source>
        <dbReference type="SAM" id="MobiDB-lite"/>
    </source>
</evidence>
<reference key="1">
    <citation type="journal article" date="2006" name="Lancet">
        <title>Complete genome sequence of USA300, an epidemic clone of community-acquired meticillin-resistant Staphylococcus aureus.</title>
        <authorList>
            <person name="Diep B.A."/>
            <person name="Gill S.R."/>
            <person name="Chang R.F."/>
            <person name="Phan T.H."/>
            <person name="Chen J.H."/>
            <person name="Davidson M.G."/>
            <person name="Lin F."/>
            <person name="Lin J."/>
            <person name="Carleton H.A."/>
            <person name="Mongodin E.F."/>
            <person name="Sensabaugh G.F."/>
            <person name="Perdreau-Remington F."/>
        </authorList>
    </citation>
    <scope>NUCLEOTIDE SEQUENCE [LARGE SCALE GENOMIC DNA]</scope>
    <source>
        <strain>USA300</strain>
    </source>
</reference>
<feature type="chain" id="PRO_0000334087" description="Cell division protein SepF">
    <location>
        <begin position="1"/>
        <end position="187"/>
    </location>
</feature>
<feature type="region of interest" description="Disordered" evidence="2">
    <location>
        <begin position="21"/>
        <end position="97"/>
    </location>
</feature>
<feature type="compositionally biased region" description="Polar residues" evidence="2">
    <location>
        <begin position="38"/>
        <end position="63"/>
    </location>
</feature>
<feature type="compositionally biased region" description="Polar residues" evidence="2">
    <location>
        <begin position="70"/>
        <end position="97"/>
    </location>
</feature>
<comment type="function">
    <text evidence="1">Cell division protein that is part of the divisome complex and is recruited early to the Z-ring. Probably stimulates Z-ring formation, perhaps through the cross-linking of FtsZ protofilaments. Its function overlaps with FtsA.</text>
</comment>
<comment type="subunit">
    <text evidence="1">Homodimer. Interacts with FtsZ.</text>
</comment>
<comment type="subcellular location">
    <subcellularLocation>
        <location evidence="1">Cytoplasm</location>
    </subcellularLocation>
    <text evidence="1">Localizes to the division site, in a FtsZ-dependent manner.</text>
</comment>
<comment type="similarity">
    <text evidence="1">Belongs to the SepF family.</text>
</comment>
<accession>Q2FHP8</accession>
<name>SEPF_STAA3</name>
<dbReference type="EMBL" id="CP000255">
    <property type="protein sequence ID" value="ABD20824.1"/>
    <property type="molecule type" value="Genomic_DNA"/>
</dbReference>
<dbReference type="RefSeq" id="WP_000018608.1">
    <property type="nucleotide sequence ID" value="NZ_CP027476.1"/>
</dbReference>
<dbReference type="SMR" id="Q2FHP8"/>
<dbReference type="KEGG" id="saa:SAUSA300_1083"/>
<dbReference type="HOGENOM" id="CLU_078499_4_1_9"/>
<dbReference type="OMA" id="ASERHYQ"/>
<dbReference type="Proteomes" id="UP000001939">
    <property type="component" value="Chromosome"/>
</dbReference>
<dbReference type="GO" id="GO:0005737">
    <property type="term" value="C:cytoplasm"/>
    <property type="evidence" value="ECO:0007669"/>
    <property type="project" value="UniProtKB-SubCell"/>
</dbReference>
<dbReference type="GO" id="GO:0000917">
    <property type="term" value="P:division septum assembly"/>
    <property type="evidence" value="ECO:0007669"/>
    <property type="project" value="UniProtKB-KW"/>
</dbReference>
<dbReference type="GO" id="GO:0043093">
    <property type="term" value="P:FtsZ-dependent cytokinesis"/>
    <property type="evidence" value="ECO:0007669"/>
    <property type="project" value="UniProtKB-UniRule"/>
</dbReference>
<dbReference type="Gene3D" id="3.30.110.150">
    <property type="entry name" value="SepF-like protein"/>
    <property type="match status" value="1"/>
</dbReference>
<dbReference type="HAMAP" id="MF_01197">
    <property type="entry name" value="SepF"/>
    <property type="match status" value="1"/>
</dbReference>
<dbReference type="InterPro" id="IPR023052">
    <property type="entry name" value="Cell_div_SepF"/>
</dbReference>
<dbReference type="InterPro" id="IPR007561">
    <property type="entry name" value="Cell_div_SepF/SepF-rel"/>
</dbReference>
<dbReference type="InterPro" id="IPR038594">
    <property type="entry name" value="SepF-like_sf"/>
</dbReference>
<dbReference type="PANTHER" id="PTHR35798">
    <property type="entry name" value="CELL DIVISION PROTEIN SEPF"/>
    <property type="match status" value="1"/>
</dbReference>
<dbReference type="PANTHER" id="PTHR35798:SF1">
    <property type="entry name" value="CELL DIVISION PROTEIN SEPF"/>
    <property type="match status" value="1"/>
</dbReference>
<dbReference type="Pfam" id="PF04472">
    <property type="entry name" value="SepF"/>
    <property type="match status" value="1"/>
</dbReference>
<proteinExistence type="inferred from homology"/>
<sequence length="187" mass="21023">MSHLALKDLFSGFFVIDDEEEVEVPDKQQQVNEAPAKEQSQQTTKQNAIKSVPQKSASRYTTTSEERNNRMSNYSKNNSRNVVTMNNATPNNASQESSKMCLFEPRVFSDTQDIADELKNRRATLVNLQRIDKVSAKRIIDFLSGTVYAIGGDIQRVGTDIFLCTPDNVEVAGSITDHIENMEHSFD</sequence>